<evidence type="ECO:0000255" key="1">
    <source>
        <dbReference type="HAMAP-Rule" id="MF_00719"/>
    </source>
</evidence>
<protein>
    <recommendedName>
        <fullName evidence="1">Adenosylcobinamide-GDP ribazoletransferase</fullName>
        <ecNumber evidence="1">2.7.8.26</ecNumber>
    </recommendedName>
    <alternativeName>
        <fullName evidence="1">Cobalamin synthase</fullName>
    </alternativeName>
    <alternativeName>
        <fullName evidence="1">Cobalamin-5'-phosphate synthase</fullName>
    </alternativeName>
</protein>
<sequence length="248" mass="27691">MKSILNDFLLMIQFFTRIPVNKNLQCEKENFRRGAFFLPVVAFIIGGMEFLIYLALKNFLPPNVIIVLLILFTAMITGGLHMDGLADTCDGFFSLRDKERIIEIMKDSRIGSYGTIALIIDLLLKYQLLYSLVLKGYSIAIVLAPIIGRISILFLCLSKRTAKKNGSGNIFIGNMSKPIIFFITTIVLALSTYFLGLRATIIPFIGVLLITYLLYLLCLNKINGLTGDTLGACNELGEITFLLILLMI</sequence>
<feature type="chain" id="PRO_1000132566" description="Adenosylcobinamide-GDP ribazoletransferase">
    <location>
        <begin position="1"/>
        <end position="248"/>
    </location>
</feature>
<feature type="transmembrane region" description="Helical" evidence="1">
    <location>
        <begin position="36"/>
        <end position="56"/>
    </location>
</feature>
<feature type="transmembrane region" description="Helical" evidence="1">
    <location>
        <begin position="59"/>
        <end position="79"/>
    </location>
</feature>
<feature type="transmembrane region" description="Helical" evidence="1">
    <location>
        <begin position="114"/>
        <end position="134"/>
    </location>
</feature>
<feature type="transmembrane region" description="Helical" evidence="1">
    <location>
        <begin position="137"/>
        <end position="157"/>
    </location>
</feature>
<feature type="transmembrane region" description="Helical" evidence="1">
    <location>
        <begin position="170"/>
        <end position="190"/>
    </location>
</feature>
<feature type="transmembrane region" description="Helical" evidence="1">
    <location>
        <begin position="199"/>
        <end position="219"/>
    </location>
</feature>
<name>COBS_CLOBK</name>
<accession>B1IGK6</accession>
<dbReference type="EC" id="2.7.8.26" evidence="1"/>
<dbReference type="EMBL" id="CP000939">
    <property type="protein sequence ID" value="ACA44283.1"/>
    <property type="molecule type" value="Genomic_DNA"/>
</dbReference>
<dbReference type="RefSeq" id="WP_003405696.1">
    <property type="nucleotide sequence ID" value="NC_010516.1"/>
</dbReference>
<dbReference type="KEGG" id="cbb:CLD_3751"/>
<dbReference type="HOGENOM" id="CLU_057426_1_2_9"/>
<dbReference type="UniPathway" id="UPA00148">
    <property type="reaction ID" value="UER00238"/>
</dbReference>
<dbReference type="Proteomes" id="UP000008541">
    <property type="component" value="Chromosome"/>
</dbReference>
<dbReference type="GO" id="GO:0005886">
    <property type="term" value="C:plasma membrane"/>
    <property type="evidence" value="ECO:0007669"/>
    <property type="project" value="UniProtKB-SubCell"/>
</dbReference>
<dbReference type="GO" id="GO:0051073">
    <property type="term" value="F:adenosylcobinamide-GDP ribazoletransferase activity"/>
    <property type="evidence" value="ECO:0007669"/>
    <property type="project" value="UniProtKB-UniRule"/>
</dbReference>
<dbReference type="GO" id="GO:0008818">
    <property type="term" value="F:cobalamin 5'-phosphate synthase activity"/>
    <property type="evidence" value="ECO:0007669"/>
    <property type="project" value="UniProtKB-UniRule"/>
</dbReference>
<dbReference type="GO" id="GO:0009236">
    <property type="term" value="P:cobalamin biosynthetic process"/>
    <property type="evidence" value="ECO:0007669"/>
    <property type="project" value="UniProtKB-UniRule"/>
</dbReference>
<dbReference type="HAMAP" id="MF_00719">
    <property type="entry name" value="CobS"/>
    <property type="match status" value="1"/>
</dbReference>
<dbReference type="InterPro" id="IPR003805">
    <property type="entry name" value="CobS"/>
</dbReference>
<dbReference type="NCBIfam" id="TIGR00317">
    <property type="entry name" value="cobS"/>
    <property type="match status" value="1"/>
</dbReference>
<dbReference type="PANTHER" id="PTHR34148">
    <property type="entry name" value="ADENOSYLCOBINAMIDE-GDP RIBAZOLETRANSFERASE"/>
    <property type="match status" value="1"/>
</dbReference>
<dbReference type="PANTHER" id="PTHR34148:SF1">
    <property type="entry name" value="ADENOSYLCOBINAMIDE-GDP RIBAZOLETRANSFERASE"/>
    <property type="match status" value="1"/>
</dbReference>
<dbReference type="Pfam" id="PF02654">
    <property type="entry name" value="CobS"/>
    <property type="match status" value="1"/>
</dbReference>
<keyword id="KW-1003">Cell membrane</keyword>
<keyword id="KW-0169">Cobalamin biosynthesis</keyword>
<keyword id="KW-0460">Magnesium</keyword>
<keyword id="KW-0472">Membrane</keyword>
<keyword id="KW-0808">Transferase</keyword>
<keyword id="KW-0812">Transmembrane</keyword>
<keyword id="KW-1133">Transmembrane helix</keyword>
<gene>
    <name evidence="1" type="primary">cobS</name>
    <name type="ordered locus">CLD_3751</name>
</gene>
<proteinExistence type="inferred from homology"/>
<reference key="1">
    <citation type="journal article" date="2007" name="PLoS ONE">
        <title>Analysis of the neurotoxin complex genes in Clostridium botulinum A1-A4 and B1 strains: BoNT/A3, /Ba4 and /B1 clusters are located within plasmids.</title>
        <authorList>
            <person name="Smith T.J."/>
            <person name="Hill K.K."/>
            <person name="Foley B.T."/>
            <person name="Detter J.C."/>
            <person name="Munk A.C."/>
            <person name="Bruce D.C."/>
            <person name="Doggett N.A."/>
            <person name="Smith L.A."/>
            <person name="Marks J.D."/>
            <person name="Xie G."/>
            <person name="Brettin T.S."/>
        </authorList>
    </citation>
    <scope>NUCLEOTIDE SEQUENCE [LARGE SCALE GENOMIC DNA]</scope>
    <source>
        <strain>Okra / Type B1</strain>
    </source>
</reference>
<organism>
    <name type="scientific">Clostridium botulinum (strain Okra / Type B1)</name>
    <dbReference type="NCBI Taxonomy" id="498213"/>
    <lineage>
        <taxon>Bacteria</taxon>
        <taxon>Bacillati</taxon>
        <taxon>Bacillota</taxon>
        <taxon>Clostridia</taxon>
        <taxon>Eubacteriales</taxon>
        <taxon>Clostridiaceae</taxon>
        <taxon>Clostridium</taxon>
    </lineage>
</organism>
<comment type="function">
    <text evidence="1">Joins adenosylcobinamide-GDP and alpha-ribazole to generate adenosylcobalamin (Ado-cobalamin). Also synthesizes adenosylcobalamin 5'-phosphate from adenosylcobinamide-GDP and alpha-ribazole 5'-phosphate.</text>
</comment>
<comment type="catalytic activity">
    <reaction evidence="1">
        <text>alpha-ribazole + adenosylcob(III)inamide-GDP = adenosylcob(III)alamin + GMP + H(+)</text>
        <dbReference type="Rhea" id="RHEA:16049"/>
        <dbReference type="ChEBI" id="CHEBI:10329"/>
        <dbReference type="ChEBI" id="CHEBI:15378"/>
        <dbReference type="ChEBI" id="CHEBI:18408"/>
        <dbReference type="ChEBI" id="CHEBI:58115"/>
        <dbReference type="ChEBI" id="CHEBI:60487"/>
        <dbReference type="EC" id="2.7.8.26"/>
    </reaction>
</comment>
<comment type="catalytic activity">
    <reaction evidence="1">
        <text>alpha-ribazole 5'-phosphate + adenosylcob(III)inamide-GDP = adenosylcob(III)alamin 5'-phosphate + GMP + H(+)</text>
        <dbReference type="Rhea" id="RHEA:23560"/>
        <dbReference type="ChEBI" id="CHEBI:15378"/>
        <dbReference type="ChEBI" id="CHEBI:57918"/>
        <dbReference type="ChEBI" id="CHEBI:58115"/>
        <dbReference type="ChEBI" id="CHEBI:60487"/>
        <dbReference type="ChEBI" id="CHEBI:60493"/>
        <dbReference type="EC" id="2.7.8.26"/>
    </reaction>
</comment>
<comment type="cofactor">
    <cofactor evidence="1">
        <name>Mg(2+)</name>
        <dbReference type="ChEBI" id="CHEBI:18420"/>
    </cofactor>
</comment>
<comment type="pathway">
    <text evidence="1">Cofactor biosynthesis; adenosylcobalamin biosynthesis; adenosylcobalamin from cob(II)yrinate a,c-diamide: step 7/7.</text>
</comment>
<comment type="subcellular location">
    <subcellularLocation>
        <location evidence="1">Cell membrane</location>
        <topology evidence="1">Multi-pass membrane protein</topology>
    </subcellularLocation>
</comment>
<comment type="similarity">
    <text evidence="1">Belongs to the CobS family.</text>
</comment>